<comment type="function">
    <text evidence="1">Part of the ABC transporter complex MetNIQ involved in methionine import. Responsible for energy coupling to the transport system.</text>
</comment>
<comment type="catalytic activity">
    <reaction evidence="1">
        <text>L-methionine(out) + ATP + H2O = L-methionine(in) + ADP + phosphate + H(+)</text>
        <dbReference type="Rhea" id="RHEA:29779"/>
        <dbReference type="ChEBI" id="CHEBI:15377"/>
        <dbReference type="ChEBI" id="CHEBI:15378"/>
        <dbReference type="ChEBI" id="CHEBI:30616"/>
        <dbReference type="ChEBI" id="CHEBI:43474"/>
        <dbReference type="ChEBI" id="CHEBI:57844"/>
        <dbReference type="ChEBI" id="CHEBI:456216"/>
        <dbReference type="EC" id="7.4.2.11"/>
    </reaction>
</comment>
<comment type="catalytic activity">
    <reaction evidence="1">
        <text>D-methionine(out) + ATP + H2O = D-methionine(in) + ADP + phosphate + H(+)</text>
        <dbReference type="Rhea" id="RHEA:29767"/>
        <dbReference type="ChEBI" id="CHEBI:15377"/>
        <dbReference type="ChEBI" id="CHEBI:15378"/>
        <dbReference type="ChEBI" id="CHEBI:30616"/>
        <dbReference type="ChEBI" id="CHEBI:43474"/>
        <dbReference type="ChEBI" id="CHEBI:57932"/>
        <dbReference type="ChEBI" id="CHEBI:456216"/>
        <dbReference type="EC" id="7.4.2.11"/>
    </reaction>
</comment>
<comment type="subunit">
    <text evidence="1">The complex is composed of two ATP-binding proteins (MetN), two transmembrane proteins (MetI) and a solute-binding protein (MetQ).</text>
</comment>
<comment type="subcellular location">
    <subcellularLocation>
        <location evidence="1">Cell membrane</location>
        <topology evidence="1">Peripheral membrane protein</topology>
    </subcellularLocation>
</comment>
<comment type="similarity">
    <text evidence="1">Belongs to the ABC transporter superfamily. Methionine importer (TC 3.A.1.24) family.</text>
</comment>
<accession>Q5HIL5</accession>
<evidence type="ECO:0000255" key="1">
    <source>
        <dbReference type="HAMAP-Rule" id="MF_01719"/>
    </source>
</evidence>
<proteinExistence type="inferred from homology"/>
<organism>
    <name type="scientific">Staphylococcus aureus (strain COL)</name>
    <dbReference type="NCBI Taxonomy" id="93062"/>
    <lineage>
        <taxon>Bacteria</taxon>
        <taxon>Bacillati</taxon>
        <taxon>Bacillota</taxon>
        <taxon>Bacilli</taxon>
        <taxon>Bacillales</taxon>
        <taxon>Staphylococcaceae</taxon>
        <taxon>Staphylococcus</taxon>
    </lineage>
</organism>
<dbReference type="EC" id="7.4.2.11" evidence="1"/>
<dbReference type="EMBL" id="CP000046">
    <property type="protein sequence ID" value="AAW37623.1"/>
    <property type="molecule type" value="Genomic_DNA"/>
</dbReference>
<dbReference type="RefSeq" id="WP_000569286.1">
    <property type="nucleotide sequence ID" value="NZ_JBGOFO010000010.1"/>
</dbReference>
<dbReference type="SMR" id="Q5HIL5"/>
<dbReference type="KEGG" id="sac:SACOL0504"/>
<dbReference type="HOGENOM" id="CLU_000604_1_3_9"/>
<dbReference type="Proteomes" id="UP000000530">
    <property type="component" value="Chromosome"/>
</dbReference>
<dbReference type="GO" id="GO:0005886">
    <property type="term" value="C:plasma membrane"/>
    <property type="evidence" value="ECO:0007669"/>
    <property type="project" value="UniProtKB-SubCell"/>
</dbReference>
<dbReference type="GO" id="GO:0033232">
    <property type="term" value="F:ABC-type D-methionine transporter activity"/>
    <property type="evidence" value="ECO:0007669"/>
    <property type="project" value="UniProtKB-EC"/>
</dbReference>
<dbReference type="GO" id="GO:0005524">
    <property type="term" value="F:ATP binding"/>
    <property type="evidence" value="ECO:0007669"/>
    <property type="project" value="UniProtKB-KW"/>
</dbReference>
<dbReference type="GO" id="GO:0016887">
    <property type="term" value="F:ATP hydrolysis activity"/>
    <property type="evidence" value="ECO:0007669"/>
    <property type="project" value="InterPro"/>
</dbReference>
<dbReference type="CDD" id="cd03258">
    <property type="entry name" value="ABC_MetN_methionine_transporter"/>
    <property type="match status" value="1"/>
</dbReference>
<dbReference type="FunFam" id="3.40.50.300:FF:000056">
    <property type="entry name" value="Cell division ATP-binding protein FtsE"/>
    <property type="match status" value="1"/>
</dbReference>
<dbReference type="Gene3D" id="3.30.70.260">
    <property type="match status" value="1"/>
</dbReference>
<dbReference type="Gene3D" id="3.40.50.300">
    <property type="entry name" value="P-loop containing nucleotide triphosphate hydrolases"/>
    <property type="match status" value="1"/>
</dbReference>
<dbReference type="InterPro" id="IPR003593">
    <property type="entry name" value="AAA+_ATPase"/>
</dbReference>
<dbReference type="InterPro" id="IPR003439">
    <property type="entry name" value="ABC_transporter-like_ATP-bd"/>
</dbReference>
<dbReference type="InterPro" id="IPR017871">
    <property type="entry name" value="ABC_transporter-like_CS"/>
</dbReference>
<dbReference type="InterPro" id="IPR045865">
    <property type="entry name" value="ACT-like_dom_sf"/>
</dbReference>
<dbReference type="InterPro" id="IPR041701">
    <property type="entry name" value="MetN_ABC"/>
</dbReference>
<dbReference type="InterPro" id="IPR050086">
    <property type="entry name" value="MetN_ABC_transporter-like"/>
</dbReference>
<dbReference type="InterPro" id="IPR018449">
    <property type="entry name" value="NIL_domain"/>
</dbReference>
<dbReference type="InterPro" id="IPR027417">
    <property type="entry name" value="P-loop_NTPase"/>
</dbReference>
<dbReference type="PANTHER" id="PTHR43166">
    <property type="entry name" value="AMINO ACID IMPORT ATP-BINDING PROTEIN"/>
    <property type="match status" value="1"/>
</dbReference>
<dbReference type="PANTHER" id="PTHR43166:SF30">
    <property type="entry name" value="METHIONINE IMPORT ATP-BINDING PROTEIN METN"/>
    <property type="match status" value="1"/>
</dbReference>
<dbReference type="Pfam" id="PF00005">
    <property type="entry name" value="ABC_tran"/>
    <property type="match status" value="1"/>
</dbReference>
<dbReference type="Pfam" id="PF09383">
    <property type="entry name" value="NIL"/>
    <property type="match status" value="1"/>
</dbReference>
<dbReference type="SMART" id="SM00382">
    <property type="entry name" value="AAA"/>
    <property type="match status" value="1"/>
</dbReference>
<dbReference type="SMART" id="SM00930">
    <property type="entry name" value="NIL"/>
    <property type="match status" value="1"/>
</dbReference>
<dbReference type="SUPFAM" id="SSF55021">
    <property type="entry name" value="ACT-like"/>
    <property type="match status" value="1"/>
</dbReference>
<dbReference type="SUPFAM" id="SSF52540">
    <property type="entry name" value="P-loop containing nucleoside triphosphate hydrolases"/>
    <property type="match status" value="1"/>
</dbReference>
<dbReference type="PROSITE" id="PS00211">
    <property type="entry name" value="ABC_TRANSPORTER_1"/>
    <property type="match status" value="1"/>
</dbReference>
<dbReference type="PROSITE" id="PS50893">
    <property type="entry name" value="ABC_TRANSPORTER_2"/>
    <property type="match status" value="1"/>
</dbReference>
<dbReference type="PROSITE" id="PS51264">
    <property type="entry name" value="METN"/>
    <property type="match status" value="1"/>
</dbReference>
<feature type="chain" id="PRO_0000270389" description="Methionine import ATP-binding protein MetN 1">
    <location>
        <begin position="1"/>
        <end position="341"/>
    </location>
</feature>
<feature type="domain" description="ABC transporter" evidence="1">
    <location>
        <begin position="2"/>
        <end position="241"/>
    </location>
</feature>
<feature type="binding site" evidence="1">
    <location>
        <begin position="38"/>
        <end position="45"/>
    </location>
    <ligand>
        <name>ATP</name>
        <dbReference type="ChEBI" id="CHEBI:30616"/>
    </ligand>
</feature>
<name>METN1_STAAC</name>
<protein>
    <recommendedName>
        <fullName evidence="1">Methionine import ATP-binding protein MetN 1</fullName>
        <ecNumber evidence="1">7.4.2.11</ecNumber>
    </recommendedName>
</protein>
<keyword id="KW-0029">Amino-acid transport</keyword>
<keyword id="KW-0067">ATP-binding</keyword>
<keyword id="KW-1003">Cell membrane</keyword>
<keyword id="KW-0472">Membrane</keyword>
<keyword id="KW-0547">Nucleotide-binding</keyword>
<keyword id="KW-1278">Translocase</keyword>
<keyword id="KW-0813">Transport</keyword>
<sequence length="341" mass="38676">MIEFRQVSKTFNKKKQKIDALKDVSFTVNRNDIFGVIGYSGAGKSTLVRLVNHLEAASNGQVIVDGHDITNYSDKMMRDIKKDIGMIFQHFNLLNSATVFKNVAMPLILSKKSKTEIKQRVTEMLEFVGLSDKKDQFPDELSGGQKQRVAIARALVTNPKILLCDEATSALDPATTASILTLLKNVNQTFGITIMMITHEMRVIKDICNRVAVMEKGKVVETGTVKEVFSHPKTTIAQNFVSTVIQTEPSTSLIRRLNDEQVGDFKDYKIFVEETQVTQPIINDLIQICGREVKILFSSMSEIQGNTVCYMWLRFNMDQQFEDTAINQYFKEKNIQFEEVH</sequence>
<gene>
    <name evidence="1" type="primary">metN1</name>
    <name type="ordered locus">SACOL0504</name>
</gene>
<reference key="1">
    <citation type="journal article" date="2005" name="J. Bacteriol.">
        <title>Insights on evolution of virulence and resistance from the complete genome analysis of an early methicillin-resistant Staphylococcus aureus strain and a biofilm-producing methicillin-resistant Staphylococcus epidermidis strain.</title>
        <authorList>
            <person name="Gill S.R."/>
            <person name="Fouts D.E."/>
            <person name="Archer G.L."/>
            <person name="Mongodin E.F."/>
            <person name="DeBoy R.T."/>
            <person name="Ravel J."/>
            <person name="Paulsen I.T."/>
            <person name="Kolonay J.F."/>
            <person name="Brinkac L.M."/>
            <person name="Beanan M.J."/>
            <person name="Dodson R.J."/>
            <person name="Daugherty S.C."/>
            <person name="Madupu R."/>
            <person name="Angiuoli S.V."/>
            <person name="Durkin A.S."/>
            <person name="Haft D.H."/>
            <person name="Vamathevan J.J."/>
            <person name="Khouri H."/>
            <person name="Utterback T.R."/>
            <person name="Lee C."/>
            <person name="Dimitrov G."/>
            <person name="Jiang L."/>
            <person name="Qin H."/>
            <person name="Weidman J."/>
            <person name="Tran K."/>
            <person name="Kang K.H."/>
            <person name="Hance I.R."/>
            <person name="Nelson K.E."/>
            <person name="Fraser C.M."/>
        </authorList>
    </citation>
    <scope>NUCLEOTIDE SEQUENCE [LARGE SCALE GENOMIC DNA]</scope>
    <source>
        <strain>COL</strain>
    </source>
</reference>